<comment type="function">
    <text evidence="1">Binds to 23S rRNA. Forms part of two intersubunit bridges in the 70S ribosome.</text>
</comment>
<comment type="subunit">
    <text evidence="1">Part of the 50S ribosomal subunit. Forms a cluster with proteins L3 and L19. In the 70S ribosome, L14 and L19 interact and together make contacts with the 16S rRNA in bridges B5 and B8.</text>
</comment>
<comment type="similarity">
    <text evidence="1">Belongs to the universal ribosomal protein uL14 family.</text>
</comment>
<gene>
    <name evidence="1" type="primary">rplN</name>
    <name type="ordered locus">GOX0370</name>
</gene>
<sequence>MIHPETNLDVADNSGARRVQCIKVLGGSKRKTASVGDVIVVSVKEAIPRGKVKKGDVHQAVIVRTSYPVRRADGSAIRFDKNAAVLLNKQQEPIGTRIFGPVVRELRARKFMKIISLAPEVL</sequence>
<organism>
    <name type="scientific">Gluconobacter oxydans (strain 621H)</name>
    <name type="common">Gluconobacter suboxydans</name>
    <dbReference type="NCBI Taxonomy" id="290633"/>
    <lineage>
        <taxon>Bacteria</taxon>
        <taxon>Pseudomonadati</taxon>
        <taxon>Pseudomonadota</taxon>
        <taxon>Alphaproteobacteria</taxon>
        <taxon>Acetobacterales</taxon>
        <taxon>Acetobacteraceae</taxon>
        <taxon>Gluconobacter</taxon>
    </lineage>
</organism>
<evidence type="ECO:0000255" key="1">
    <source>
        <dbReference type="HAMAP-Rule" id="MF_01367"/>
    </source>
</evidence>
<evidence type="ECO:0000305" key="2"/>
<reference key="1">
    <citation type="journal article" date="2005" name="Nat. Biotechnol.">
        <title>Complete genome sequence of the acetic acid bacterium Gluconobacter oxydans.</title>
        <authorList>
            <person name="Prust C."/>
            <person name="Hoffmeister M."/>
            <person name="Liesegang H."/>
            <person name="Wiezer A."/>
            <person name="Fricke W.F."/>
            <person name="Ehrenreich A."/>
            <person name="Gottschalk G."/>
            <person name="Deppenmeier U."/>
        </authorList>
    </citation>
    <scope>NUCLEOTIDE SEQUENCE [LARGE SCALE GENOMIC DNA]</scope>
    <source>
        <strain>621H</strain>
    </source>
</reference>
<dbReference type="EMBL" id="CP000009">
    <property type="protein sequence ID" value="AAW60153.1"/>
    <property type="molecule type" value="Genomic_DNA"/>
</dbReference>
<dbReference type="RefSeq" id="WP_011251956.1">
    <property type="nucleotide sequence ID" value="NZ_LT900338.1"/>
</dbReference>
<dbReference type="SMR" id="Q5FTZ3"/>
<dbReference type="STRING" id="290633.GOX0370"/>
<dbReference type="GeneID" id="76195072"/>
<dbReference type="KEGG" id="gox:GOX0370"/>
<dbReference type="eggNOG" id="COG0093">
    <property type="taxonomic scope" value="Bacteria"/>
</dbReference>
<dbReference type="HOGENOM" id="CLU_095071_2_1_5"/>
<dbReference type="Proteomes" id="UP000006375">
    <property type="component" value="Chromosome"/>
</dbReference>
<dbReference type="GO" id="GO:0022625">
    <property type="term" value="C:cytosolic large ribosomal subunit"/>
    <property type="evidence" value="ECO:0007669"/>
    <property type="project" value="TreeGrafter"/>
</dbReference>
<dbReference type="GO" id="GO:0070180">
    <property type="term" value="F:large ribosomal subunit rRNA binding"/>
    <property type="evidence" value="ECO:0007669"/>
    <property type="project" value="TreeGrafter"/>
</dbReference>
<dbReference type="GO" id="GO:0003735">
    <property type="term" value="F:structural constituent of ribosome"/>
    <property type="evidence" value="ECO:0007669"/>
    <property type="project" value="InterPro"/>
</dbReference>
<dbReference type="GO" id="GO:0006412">
    <property type="term" value="P:translation"/>
    <property type="evidence" value="ECO:0007669"/>
    <property type="project" value="UniProtKB-UniRule"/>
</dbReference>
<dbReference type="CDD" id="cd00337">
    <property type="entry name" value="Ribosomal_uL14"/>
    <property type="match status" value="1"/>
</dbReference>
<dbReference type="FunFam" id="2.40.150.20:FF:000001">
    <property type="entry name" value="50S ribosomal protein L14"/>
    <property type="match status" value="1"/>
</dbReference>
<dbReference type="Gene3D" id="2.40.150.20">
    <property type="entry name" value="Ribosomal protein L14"/>
    <property type="match status" value="1"/>
</dbReference>
<dbReference type="HAMAP" id="MF_01367">
    <property type="entry name" value="Ribosomal_uL14"/>
    <property type="match status" value="1"/>
</dbReference>
<dbReference type="InterPro" id="IPR000218">
    <property type="entry name" value="Ribosomal_uL14"/>
</dbReference>
<dbReference type="InterPro" id="IPR005745">
    <property type="entry name" value="Ribosomal_uL14_bac-type"/>
</dbReference>
<dbReference type="InterPro" id="IPR019972">
    <property type="entry name" value="Ribosomal_uL14_CS"/>
</dbReference>
<dbReference type="InterPro" id="IPR036853">
    <property type="entry name" value="Ribosomal_uL14_sf"/>
</dbReference>
<dbReference type="NCBIfam" id="TIGR01067">
    <property type="entry name" value="rplN_bact"/>
    <property type="match status" value="1"/>
</dbReference>
<dbReference type="PANTHER" id="PTHR11761">
    <property type="entry name" value="50S/60S RIBOSOMAL PROTEIN L14/L23"/>
    <property type="match status" value="1"/>
</dbReference>
<dbReference type="PANTHER" id="PTHR11761:SF3">
    <property type="entry name" value="LARGE RIBOSOMAL SUBUNIT PROTEIN UL14M"/>
    <property type="match status" value="1"/>
</dbReference>
<dbReference type="Pfam" id="PF00238">
    <property type="entry name" value="Ribosomal_L14"/>
    <property type="match status" value="1"/>
</dbReference>
<dbReference type="SMART" id="SM01374">
    <property type="entry name" value="Ribosomal_L14"/>
    <property type="match status" value="1"/>
</dbReference>
<dbReference type="SUPFAM" id="SSF50193">
    <property type="entry name" value="Ribosomal protein L14"/>
    <property type="match status" value="1"/>
</dbReference>
<dbReference type="PROSITE" id="PS00049">
    <property type="entry name" value="RIBOSOMAL_L14"/>
    <property type="match status" value="1"/>
</dbReference>
<keyword id="KW-1185">Reference proteome</keyword>
<keyword id="KW-0687">Ribonucleoprotein</keyword>
<keyword id="KW-0689">Ribosomal protein</keyword>
<keyword id="KW-0694">RNA-binding</keyword>
<keyword id="KW-0699">rRNA-binding</keyword>
<protein>
    <recommendedName>
        <fullName evidence="1">Large ribosomal subunit protein uL14</fullName>
    </recommendedName>
    <alternativeName>
        <fullName evidence="2">50S ribosomal protein L14</fullName>
    </alternativeName>
</protein>
<feature type="chain" id="PRO_0000266491" description="Large ribosomal subunit protein uL14">
    <location>
        <begin position="1"/>
        <end position="122"/>
    </location>
</feature>
<name>RL14_GLUOX</name>
<accession>Q5FTZ3</accession>
<proteinExistence type="inferred from homology"/>